<dbReference type="EMBL" id="AF303741">
    <property type="protein sequence ID" value="AAK82228.1"/>
    <property type="molecule type" value="Genomic_DNA"/>
</dbReference>
<dbReference type="RefSeq" id="NP_149831.1">
    <property type="nucleotide sequence ID" value="NC_003038.1"/>
</dbReference>
<dbReference type="SMR" id="Q91FF6"/>
<dbReference type="KEGG" id="vg:1733243"/>
<dbReference type="Proteomes" id="UP000001359">
    <property type="component" value="Genome"/>
</dbReference>
<proteinExistence type="inferred from homology"/>
<evidence type="ECO:0000255" key="1"/>
<organism>
    <name type="scientific">Invertebrate iridescent virus 6</name>
    <name type="common">IIV-6</name>
    <name type="synonym">Chilo iridescent virus</name>
    <dbReference type="NCBI Taxonomy" id="176652"/>
    <lineage>
        <taxon>Viruses</taxon>
        <taxon>Varidnaviria</taxon>
        <taxon>Bamfordvirae</taxon>
        <taxon>Nucleocytoviricota</taxon>
        <taxon>Megaviricetes</taxon>
        <taxon>Pimascovirales</taxon>
        <taxon>Iridoviridae</taxon>
        <taxon>Betairidovirinae</taxon>
        <taxon>Iridovirus</taxon>
    </lineage>
</organism>
<organismHost>
    <name type="scientific">Acheta domesticus</name>
    <name type="common">House cricket</name>
    <dbReference type="NCBI Taxonomy" id="6997"/>
</organismHost>
<organismHost>
    <name type="scientific">Chilo suppressalis</name>
    <name type="common">Asiatic rice borer moth</name>
    <dbReference type="NCBI Taxonomy" id="168631"/>
</organismHost>
<organismHost>
    <name type="scientific">Gryllus bimaculatus</name>
    <name type="common">Two-spotted cricket</name>
    <dbReference type="NCBI Taxonomy" id="6999"/>
</organismHost>
<organismHost>
    <name type="scientific">Gryllus campestris</name>
    <dbReference type="NCBI Taxonomy" id="58607"/>
</organismHost>
<organismHost>
    <name type="scientific">Spodoptera frugiperda</name>
    <name type="common">Fall armyworm</name>
    <dbReference type="NCBI Taxonomy" id="7108"/>
</organismHost>
<reference key="1">
    <citation type="journal article" date="2001" name="Virology">
        <title>Analysis of the first complete DNA sequence of an invertebrate iridovirus: coding strategy of the genome of Chilo iridescent virus.</title>
        <authorList>
            <person name="Jakob N.J."/>
            <person name="Mueller K."/>
            <person name="Bahr U."/>
            <person name="Darai G."/>
        </authorList>
    </citation>
    <scope>NUCLEOTIDE SEQUENCE [LARGE SCALE GENOMIC DNA]</scope>
</reference>
<reference key="2">
    <citation type="journal article" date="2007" name="Virol. J.">
        <title>Comparative genomic analysis of the family Iridoviridae: re-annotating and defining the core set of iridovirus genes.</title>
        <authorList>
            <person name="Eaton H.E."/>
            <person name="Metcalf J."/>
            <person name="Penny E."/>
            <person name="Tcherepanov V."/>
            <person name="Upton C."/>
            <person name="Brunetti C.R."/>
        </authorList>
    </citation>
    <scope>GENOME REANNOTATION</scope>
</reference>
<feature type="signal peptide" evidence="1">
    <location>
        <begin position="1"/>
        <end position="22"/>
    </location>
</feature>
<feature type="chain" id="PRO_0000377871" description="Uncharacterized protein 368R">
    <location>
        <begin position="23"/>
        <end position="93"/>
    </location>
</feature>
<feature type="glycosylation site" description="N-linked (GlcNAc...) asparagine; by host" evidence="1">
    <location>
        <position position="5"/>
    </location>
</feature>
<protein>
    <recommendedName>
        <fullName>Uncharacterized protein 368R</fullName>
    </recommendedName>
</protein>
<keyword id="KW-0325">Glycoprotein</keyword>
<keyword id="KW-1185">Reference proteome</keyword>
<keyword id="KW-0732">Signal</keyword>
<gene>
    <name type="ORF">IIV6-368R</name>
</gene>
<accession>Q91FF6</accession>
<sequence>MSIPNLSSVTQLLSIATGLVSTNNPVVVPVVTQILSVVSQLLSGTPASVVLPILQGLIPLLTNFPLILIQLLSVIAGLQGLPVPSSFSPDYKV</sequence>
<name>368R_IIV6</name>